<comment type="function">
    <text evidence="4">VPS4-associated protein involved in trafficking to the vacuole.</text>
</comment>
<comment type="subunit">
    <text evidence="4">Interacts with VPS4.</text>
</comment>
<comment type="subcellular location">
    <subcellularLocation>
        <location evidence="4">Cytoplasm</location>
    </subcellularLocation>
    <subcellularLocation>
        <location evidence="4">Endosome</location>
    </subcellularLocation>
    <text>Requires VPS4 for its recruitment to endosomes.</text>
</comment>
<comment type="miscellaneous">
    <text evidence="3">Present with 967 molecules/cell in log phase SD medium.</text>
</comment>
<proteinExistence type="evidence at protein level"/>
<reference key="1">
    <citation type="journal article" date="1997" name="Nature">
        <title>The nucleotide sequence of Saccharomyces cerevisiae chromosome V.</title>
        <authorList>
            <person name="Dietrich F.S."/>
            <person name="Mulligan J.T."/>
            <person name="Hennessy K.M."/>
            <person name="Yelton M.A."/>
            <person name="Allen E."/>
            <person name="Araujo R."/>
            <person name="Aviles E."/>
            <person name="Berno A."/>
            <person name="Brennan T."/>
            <person name="Carpenter J."/>
            <person name="Chen E."/>
            <person name="Cherry J.M."/>
            <person name="Chung E."/>
            <person name="Duncan M."/>
            <person name="Guzman E."/>
            <person name="Hartzell G."/>
            <person name="Hunicke-Smith S."/>
            <person name="Hyman R.W."/>
            <person name="Kayser A."/>
            <person name="Komp C."/>
            <person name="Lashkari D."/>
            <person name="Lew H."/>
            <person name="Lin D."/>
            <person name="Mosedale D."/>
            <person name="Nakahara K."/>
            <person name="Namath A."/>
            <person name="Norgren R."/>
            <person name="Oefner P."/>
            <person name="Oh C."/>
            <person name="Petel F.X."/>
            <person name="Roberts D."/>
            <person name="Sehl P."/>
            <person name="Schramm S."/>
            <person name="Shogren T."/>
            <person name="Smith V."/>
            <person name="Taylor P."/>
            <person name="Wei Y."/>
            <person name="Botstein D."/>
            <person name="Davis R.W."/>
        </authorList>
    </citation>
    <scope>NUCLEOTIDE SEQUENCE [LARGE SCALE GENOMIC DNA]</scope>
    <source>
        <strain>ATCC 204508 / S288c</strain>
    </source>
</reference>
<reference key="2">
    <citation type="journal article" date="2014" name="G3 (Bethesda)">
        <title>The reference genome sequence of Saccharomyces cerevisiae: Then and now.</title>
        <authorList>
            <person name="Engel S.R."/>
            <person name="Dietrich F.S."/>
            <person name="Fisk D.G."/>
            <person name="Binkley G."/>
            <person name="Balakrishnan R."/>
            <person name="Costanzo M.C."/>
            <person name="Dwight S.S."/>
            <person name="Hitz B.C."/>
            <person name="Karra K."/>
            <person name="Nash R.S."/>
            <person name="Weng S."/>
            <person name="Wong E.D."/>
            <person name="Lloyd P."/>
            <person name="Skrzypek M.S."/>
            <person name="Miyasato S.R."/>
            <person name="Simison M."/>
            <person name="Cherry J.M."/>
        </authorList>
    </citation>
    <scope>GENOME REANNOTATION</scope>
    <source>
        <strain>ATCC 204508 / S288c</strain>
    </source>
</reference>
<reference key="3">
    <citation type="journal article" date="2003" name="Nature">
        <title>Global analysis of protein expression in yeast.</title>
        <authorList>
            <person name="Ghaemmaghami S."/>
            <person name="Huh W.-K."/>
            <person name="Bower K."/>
            <person name="Howson R.W."/>
            <person name="Belle A."/>
            <person name="Dephoure N."/>
            <person name="O'Shea E.K."/>
            <person name="Weissman J.S."/>
        </authorList>
    </citation>
    <scope>LEVEL OF PROTEIN EXPRESSION [LARGE SCALE ANALYSIS]</scope>
</reference>
<reference key="4">
    <citation type="journal article" date="2011" name="Traffic">
        <title>An overexpression screen in Saccharomyces cerevisiae identifies novel genes that affect endocytic protein trafficking.</title>
        <authorList>
            <person name="Arlt H."/>
            <person name="Perz A."/>
            <person name="Ungermann C."/>
        </authorList>
    </citation>
    <scope>INTERACTION WITH VPS4</scope>
    <scope>SUBCELLULAR LOCATION</scope>
    <scope>FUNCTION</scope>
</reference>
<reference key="5">
    <citation type="journal article" date="2012" name="Proc. Natl. Acad. Sci. U.S.A.">
        <title>N-terminal acetylome analyses and functional insights of the N-terminal acetyltransferase NatB.</title>
        <authorList>
            <person name="Van Damme P."/>
            <person name="Lasa M."/>
            <person name="Polevoda B."/>
            <person name="Gazquez C."/>
            <person name="Elosegui-Artola A."/>
            <person name="Kim D.S."/>
            <person name="De Juan-Pardo E."/>
            <person name="Demeyer K."/>
            <person name="Hole K."/>
            <person name="Larrea E."/>
            <person name="Timmerman E."/>
            <person name="Prieto J."/>
            <person name="Arnesen T."/>
            <person name="Sherman F."/>
            <person name="Gevaert K."/>
            <person name="Aldabe R."/>
        </authorList>
    </citation>
    <scope>IDENTIFICATION BY MASS SPECTROMETRY [LARGE SCALE ANALYSIS]</scope>
</reference>
<sequence length="203" mass="23489">MINEYVARKVALKDMQPCAICSKPSTTVLYNASGPDWLYTCEIHLQDNPQFVIPLYSTEYNEAVAQLKLVKGKMDSLTSAQTQLGSWDGWVTKIFSKKEKETNNSKDPDPTTTDSTDTSPQAKNDAEILSETKKQYSKILDKVTELQRKNRKYELAKIMFESRLLRKRTEQVNRERYLKEQENYSNTDPEELLRKHVFPSVPK</sequence>
<accession>P40080</accession>
<accession>D3DM34</accession>
<evidence type="ECO:0000255" key="1"/>
<evidence type="ECO:0000256" key="2">
    <source>
        <dbReference type="SAM" id="MobiDB-lite"/>
    </source>
</evidence>
<evidence type="ECO:0000269" key="3">
    <source>
    </source>
</evidence>
<evidence type="ECO:0000269" key="4">
    <source>
    </source>
</evidence>
<evidence type="ECO:0007829" key="5">
    <source>
        <dbReference type="PDB" id="5FVK"/>
    </source>
</evidence>
<feature type="chain" id="PRO_0000202649" description="VPS4-associated protein 1">
    <location>
        <begin position="1"/>
        <end position="203"/>
    </location>
</feature>
<feature type="region of interest" description="Disordered" evidence="2">
    <location>
        <begin position="99"/>
        <end position="125"/>
    </location>
</feature>
<feature type="region of interest" description="Disordered" evidence="2">
    <location>
        <begin position="171"/>
        <end position="193"/>
    </location>
</feature>
<feature type="coiled-coil region" evidence="1">
    <location>
        <begin position="121"/>
        <end position="157"/>
    </location>
</feature>
<feature type="compositionally biased region" description="Basic and acidic residues" evidence="2">
    <location>
        <begin position="99"/>
        <end position="109"/>
    </location>
</feature>
<feature type="compositionally biased region" description="Low complexity" evidence="2">
    <location>
        <begin position="110"/>
        <end position="120"/>
    </location>
</feature>
<feature type="compositionally biased region" description="Basic and acidic residues" evidence="2">
    <location>
        <begin position="171"/>
        <end position="182"/>
    </location>
</feature>
<feature type="helix" evidence="5">
    <location>
        <begin position="189"/>
        <end position="195"/>
    </location>
</feature>
<organism>
    <name type="scientific">Saccharomyces cerevisiae (strain ATCC 204508 / S288c)</name>
    <name type="common">Baker's yeast</name>
    <dbReference type="NCBI Taxonomy" id="559292"/>
    <lineage>
        <taxon>Eukaryota</taxon>
        <taxon>Fungi</taxon>
        <taxon>Dikarya</taxon>
        <taxon>Ascomycota</taxon>
        <taxon>Saccharomycotina</taxon>
        <taxon>Saccharomycetes</taxon>
        <taxon>Saccharomycetales</taxon>
        <taxon>Saccharomycetaceae</taxon>
        <taxon>Saccharomyces</taxon>
    </lineage>
</organism>
<gene>
    <name type="primary">VFA1</name>
    <name type="ordered locus">YER128W</name>
    <name type="ORF">SYGP-ORF44</name>
</gene>
<dbReference type="EMBL" id="U18916">
    <property type="protein sequence ID" value="AAC03226.1"/>
    <property type="molecule type" value="Genomic_DNA"/>
</dbReference>
<dbReference type="EMBL" id="BK006939">
    <property type="protein sequence ID" value="DAA07788.1"/>
    <property type="molecule type" value="Genomic_DNA"/>
</dbReference>
<dbReference type="PIR" id="S43222">
    <property type="entry name" value="S43222"/>
</dbReference>
<dbReference type="RefSeq" id="NP_011054.3">
    <property type="nucleotide sequence ID" value="NM_001179018.3"/>
</dbReference>
<dbReference type="PDB" id="4NIQ">
    <property type="method" value="X-ray"/>
    <property type="resolution" value="2.30 A"/>
    <property type="chains" value="C/D=182-203"/>
</dbReference>
<dbReference type="PDB" id="5FVK">
    <property type="method" value="X-ray"/>
    <property type="resolution" value="1.66 A"/>
    <property type="chains" value="C/D=182-203"/>
</dbReference>
<dbReference type="PDBsum" id="4NIQ"/>
<dbReference type="PDBsum" id="5FVK"/>
<dbReference type="SMR" id="P40080"/>
<dbReference type="BioGRID" id="36872">
    <property type="interactions" value="93"/>
</dbReference>
<dbReference type="DIP" id="DIP-5406N"/>
<dbReference type="FunCoup" id="P40080">
    <property type="interactions" value="34"/>
</dbReference>
<dbReference type="IntAct" id="P40080">
    <property type="interactions" value="3"/>
</dbReference>
<dbReference type="STRING" id="4932.YER128W"/>
<dbReference type="iPTMnet" id="P40080"/>
<dbReference type="PaxDb" id="4932-YER128W"/>
<dbReference type="PeptideAtlas" id="P40080"/>
<dbReference type="DNASU" id="856865"/>
<dbReference type="EnsemblFungi" id="YER128W_mRNA">
    <property type="protein sequence ID" value="YER128W"/>
    <property type="gene ID" value="YER128W"/>
</dbReference>
<dbReference type="GeneID" id="856865"/>
<dbReference type="KEGG" id="sce:YER128W"/>
<dbReference type="AGR" id="SGD:S000000930"/>
<dbReference type="SGD" id="S000000930">
    <property type="gene designation" value="VFA1"/>
</dbReference>
<dbReference type="VEuPathDB" id="FungiDB:YER128W"/>
<dbReference type="eggNOG" id="ENOG502RW3H">
    <property type="taxonomic scope" value="Eukaryota"/>
</dbReference>
<dbReference type="HOGENOM" id="CLU_088285_2_1_1"/>
<dbReference type="InParanoid" id="P40080"/>
<dbReference type="OMA" id="FYVCPAH"/>
<dbReference type="OrthoDB" id="2158714at2759"/>
<dbReference type="BioCyc" id="YEAST:G3O-30291-MONOMER"/>
<dbReference type="BioGRID-ORCS" id="856865">
    <property type="hits" value="0 hits in 10 CRISPR screens"/>
</dbReference>
<dbReference type="PRO" id="PR:P40080"/>
<dbReference type="Proteomes" id="UP000002311">
    <property type="component" value="Chromosome V"/>
</dbReference>
<dbReference type="RNAct" id="P40080">
    <property type="molecule type" value="protein"/>
</dbReference>
<dbReference type="GO" id="GO:0005737">
    <property type="term" value="C:cytoplasm"/>
    <property type="evidence" value="ECO:0000314"/>
    <property type="project" value="SGD"/>
</dbReference>
<dbReference type="GO" id="GO:0005768">
    <property type="term" value="C:endosome"/>
    <property type="evidence" value="ECO:0000314"/>
    <property type="project" value="SGD"/>
</dbReference>
<dbReference type="GO" id="GO:0001671">
    <property type="term" value="F:ATPase activator activity"/>
    <property type="evidence" value="ECO:0000314"/>
    <property type="project" value="SGD"/>
</dbReference>
<dbReference type="GO" id="GO:0015031">
    <property type="term" value="P:protein transport"/>
    <property type="evidence" value="ECO:0007669"/>
    <property type="project" value="UniProtKB-KW"/>
</dbReference>
<dbReference type="GO" id="GO:0007034">
    <property type="term" value="P:vacuolar transport"/>
    <property type="evidence" value="ECO:0000315"/>
    <property type="project" value="SGD"/>
</dbReference>
<dbReference type="InterPro" id="IPR013640">
    <property type="entry name" value="Vfa1"/>
</dbReference>
<dbReference type="PANTHER" id="PTHR28218">
    <property type="entry name" value="VPS4-ASSOCIATED PROTEIN 1"/>
    <property type="match status" value="1"/>
</dbReference>
<dbReference type="PANTHER" id="PTHR28218:SF1">
    <property type="entry name" value="VPS4-ASSOCIATED PROTEIN 1"/>
    <property type="match status" value="1"/>
</dbReference>
<dbReference type="Pfam" id="PF08432">
    <property type="entry name" value="Vfa1"/>
    <property type="match status" value="1"/>
</dbReference>
<keyword id="KW-0002">3D-structure</keyword>
<keyword id="KW-0175">Coiled coil</keyword>
<keyword id="KW-0963">Cytoplasm</keyword>
<keyword id="KW-0967">Endosome</keyword>
<keyword id="KW-0653">Protein transport</keyword>
<keyword id="KW-1185">Reference proteome</keyword>
<keyword id="KW-0813">Transport</keyword>
<protein>
    <recommendedName>
        <fullName>VPS4-associated protein 1</fullName>
    </recommendedName>
</protein>
<name>VFA1_YEAST</name>